<feature type="initiator methionine" description="Removed" evidence="2">
    <location>
        <position position="1"/>
    </location>
</feature>
<feature type="chain" id="PRO_0000157919" description="3-oxoadipate CoA-transferase subunit B">
    <location>
        <begin position="2"/>
        <end position="213"/>
    </location>
</feature>
<feature type="active site" evidence="1">
    <location>
        <position position="50"/>
    </location>
</feature>
<organism>
    <name type="scientific">Pseudomonas putida</name>
    <name type="common">Arthrobacter siderocapsulatus</name>
    <dbReference type="NCBI Taxonomy" id="303"/>
    <lineage>
        <taxon>Bacteria</taxon>
        <taxon>Pseudomonadati</taxon>
        <taxon>Pseudomonadota</taxon>
        <taxon>Gammaproteobacteria</taxon>
        <taxon>Pseudomonadales</taxon>
        <taxon>Pseudomonadaceae</taxon>
        <taxon>Pseudomonas</taxon>
    </lineage>
</organism>
<proteinExistence type="evidence at protein level"/>
<protein>
    <recommendedName>
        <fullName>3-oxoadipate CoA-transferase subunit B</fullName>
        <ecNumber>2.8.3.6</ecNumber>
    </recommendedName>
    <alternativeName>
        <fullName>Beta-ketoadipate:succinyl-CoA transferase subunit B</fullName>
    </alternativeName>
</protein>
<accession>P0A102</accession>
<accession>Q01104</accession>
<reference key="1">
    <citation type="journal article" date="1992" name="J. Bacteriol.">
        <title>Characterization of the genes encoding beta-ketoadipate: succinyl-coenzyme A transferase in Pseudomonas putida.</title>
        <authorList>
            <person name="Parales R.E."/>
            <person name="Harwood C.S."/>
        </authorList>
    </citation>
    <scope>NUCLEOTIDE SEQUENCE [GENOMIC DNA]</scope>
    <source>
        <strain>PRS2000</strain>
    </source>
</reference>
<reference key="2">
    <citation type="journal article" date="1981" name="J. Biol. Chem.">
        <title>Evolutionarily homologous alpha 2 beta 2 oligomeric structures in beta-ketoadipate succinyl-CoA transferases from Acinetobacter calcoaceticus and Pseudomonas putida.</title>
        <authorList>
            <person name="Yeh W.-K."/>
            <person name="Ornston L.N."/>
        </authorList>
    </citation>
    <scope>PROTEIN SEQUENCE OF 2-7</scope>
</reference>
<evidence type="ECO:0000255" key="1">
    <source>
        <dbReference type="PROSITE-ProRule" id="PRU10034"/>
    </source>
</evidence>
<evidence type="ECO:0000269" key="2">
    <source>
    </source>
</evidence>
<evidence type="ECO:0000305" key="3"/>
<name>PCAJ_PSEPU</name>
<keyword id="KW-0058">Aromatic hydrocarbons catabolism</keyword>
<keyword id="KW-0903">Direct protein sequencing</keyword>
<keyword id="KW-0808">Transferase</keyword>
<comment type="catalytic activity">
    <reaction>
        <text>3-oxoadipate + succinyl-CoA = 3-oxoadipyl-CoA + succinate</text>
        <dbReference type="Rhea" id="RHEA:12048"/>
        <dbReference type="ChEBI" id="CHEBI:15775"/>
        <dbReference type="ChEBI" id="CHEBI:30031"/>
        <dbReference type="ChEBI" id="CHEBI:57292"/>
        <dbReference type="ChEBI" id="CHEBI:57348"/>
        <dbReference type="EC" id="2.8.3.6"/>
    </reaction>
</comment>
<comment type="pathway">
    <text>Aromatic compound metabolism; beta-ketoadipate pathway; acetyl-CoA and succinyl-CoA from 3-oxoadipate: step 1/2.</text>
</comment>
<comment type="subunit">
    <text>Heterodimer.</text>
</comment>
<comment type="similarity">
    <text evidence="3">Belongs to the 3-oxoacid CoA-transferase subunit B family.</text>
</comment>
<gene>
    <name type="primary">pcaJ</name>
</gene>
<sequence length="213" mass="22552">MTITKKLSRTEMAQRVAADIQEGAYVNLGIGAPTLVANYLGDKEVFLHSENGLLGMGPSPAPGEEDDDLINAGKQHVTLLTGGAFFHHADSFSMMRGGHLDIAVLGAFQVSVKGDLANWHTGAEGSIPAVGGAMDLATGARQVFVMMDHLTKTGESKLVPECTYPLTGIACVSRIYTDLAVLEVTPEGLKVVEICADIDFDELQKLSGVPLIK</sequence>
<dbReference type="EC" id="2.8.3.6"/>
<dbReference type="EMBL" id="M88763">
    <property type="protein sequence ID" value="AAA25923.1"/>
    <property type="molecule type" value="Genomic_DNA"/>
</dbReference>
<dbReference type="PIR" id="B42985">
    <property type="entry name" value="B42985"/>
</dbReference>
<dbReference type="RefSeq" id="WP_003251131.1">
    <property type="nucleotide sequence ID" value="NZ_WOWR01000003.1"/>
</dbReference>
<dbReference type="SMR" id="P0A102"/>
<dbReference type="OMA" id="ANWHTGE"/>
<dbReference type="BioCyc" id="MetaCyc:MONOMER-3191"/>
<dbReference type="BRENDA" id="2.8.3.6">
    <property type="organism ID" value="5092"/>
</dbReference>
<dbReference type="UniPathway" id="UPA00157">
    <property type="reaction ID" value="UER00262"/>
</dbReference>
<dbReference type="GO" id="GO:0047569">
    <property type="term" value="F:3-oxoadipate CoA-transferase activity"/>
    <property type="evidence" value="ECO:0007669"/>
    <property type="project" value="UniProtKB-EC"/>
</dbReference>
<dbReference type="GO" id="GO:0042952">
    <property type="term" value="P:beta-ketoadipate pathway"/>
    <property type="evidence" value="ECO:0007669"/>
    <property type="project" value="UniProtKB-UniPathway"/>
</dbReference>
<dbReference type="Gene3D" id="3.40.1080.10">
    <property type="entry name" value="Glutaconate Coenzyme A-transferase"/>
    <property type="match status" value="1"/>
</dbReference>
<dbReference type="InterPro" id="IPR012791">
    <property type="entry name" value="3-oxoacid_CoA-transf_B"/>
</dbReference>
<dbReference type="InterPro" id="IPR004165">
    <property type="entry name" value="CoA_trans_fam_I"/>
</dbReference>
<dbReference type="InterPro" id="IPR004164">
    <property type="entry name" value="CoA_transf_AS"/>
</dbReference>
<dbReference type="InterPro" id="IPR037171">
    <property type="entry name" value="NagB/RpiA_transferase-like"/>
</dbReference>
<dbReference type="NCBIfam" id="TIGR02428">
    <property type="entry name" value="pcaJ_scoB_fam"/>
    <property type="match status" value="1"/>
</dbReference>
<dbReference type="PANTHER" id="PTHR13707">
    <property type="entry name" value="KETOACID-COENZYME A TRANSFERASE"/>
    <property type="match status" value="1"/>
</dbReference>
<dbReference type="PANTHER" id="PTHR13707:SF57">
    <property type="entry name" value="SUCCINYL-COA:3-KETOACID COENZYME A TRANSFERASE SUBUNIT B-RELATED"/>
    <property type="match status" value="1"/>
</dbReference>
<dbReference type="Pfam" id="PF01144">
    <property type="entry name" value="CoA_trans"/>
    <property type="match status" value="1"/>
</dbReference>
<dbReference type="SMART" id="SM00882">
    <property type="entry name" value="CoA_trans"/>
    <property type="match status" value="1"/>
</dbReference>
<dbReference type="SUPFAM" id="SSF100950">
    <property type="entry name" value="NagB/RpiA/CoA transferase-like"/>
    <property type="match status" value="1"/>
</dbReference>
<dbReference type="PROSITE" id="PS01274">
    <property type="entry name" value="COA_TRANSF_2"/>
    <property type="match status" value="1"/>
</dbReference>